<gene>
    <name evidence="1" type="primary">rpmH</name>
    <name type="ordered locus">Lxx25280</name>
</gene>
<evidence type="ECO:0000255" key="1">
    <source>
        <dbReference type="HAMAP-Rule" id="MF_00391"/>
    </source>
</evidence>
<evidence type="ECO:0000305" key="2"/>
<sequence length="45" mass="5267">MSKRTFQPNNRKRAKTHGFRLRMRTRAGRAILSARRAKGRQKLSA</sequence>
<reference key="1">
    <citation type="journal article" date="2004" name="Mol. Plant Microbe Interact.">
        <title>The genome sequence of the Gram-positive sugarcane pathogen Leifsonia xyli subsp. xyli.</title>
        <authorList>
            <person name="Monteiro-Vitorello C.B."/>
            <person name="Camargo L.E.A."/>
            <person name="Van Sluys M.A."/>
            <person name="Kitajima J.P."/>
            <person name="Truffi D."/>
            <person name="do Amaral A.M."/>
            <person name="Harakava R."/>
            <person name="de Oliveira J.C.F."/>
            <person name="Wood D."/>
            <person name="de Oliveira M.C."/>
            <person name="Miyaki C.Y."/>
            <person name="Takita M.A."/>
            <person name="da Silva A.C.R."/>
            <person name="Furlan L.R."/>
            <person name="Carraro D.M."/>
            <person name="Camarotte G."/>
            <person name="Almeida N.F. Jr."/>
            <person name="Carrer H."/>
            <person name="Coutinho L.L."/>
            <person name="El-Dorry H.A."/>
            <person name="Ferro M.I.T."/>
            <person name="Gagliardi P.R."/>
            <person name="Giglioti E."/>
            <person name="Goldman M.H.S."/>
            <person name="Goldman G.H."/>
            <person name="Kimura E.T."/>
            <person name="Ferro E.S."/>
            <person name="Kuramae E.E."/>
            <person name="Lemos E.G.M."/>
            <person name="Lemos M.V.F."/>
            <person name="Mauro S.M.Z."/>
            <person name="Machado M.A."/>
            <person name="Marino C.L."/>
            <person name="Menck C.F."/>
            <person name="Nunes L.R."/>
            <person name="Oliveira R.C."/>
            <person name="Pereira G.G."/>
            <person name="Siqueira W."/>
            <person name="de Souza A.A."/>
            <person name="Tsai S.M."/>
            <person name="Zanca A.S."/>
            <person name="Simpson A.J.G."/>
            <person name="Brumbley S.M."/>
            <person name="Setubal J.C."/>
        </authorList>
    </citation>
    <scope>NUCLEOTIDE SEQUENCE [LARGE SCALE GENOMIC DNA]</scope>
    <source>
        <strain>CTCB07</strain>
    </source>
</reference>
<proteinExistence type="inferred from homology"/>
<feature type="chain" id="PRO_0000187400" description="Large ribosomal subunit protein bL34">
    <location>
        <begin position="1"/>
        <end position="45"/>
    </location>
</feature>
<accession>Q6ABV3</accession>
<keyword id="KW-1185">Reference proteome</keyword>
<keyword id="KW-0687">Ribonucleoprotein</keyword>
<keyword id="KW-0689">Ribosomal protein</keyword>
<protein>
    <recommendedName>
        <fullName evidence="1">Large ribosomal subunit protein bL34</fullName>
    </recommendedName>
    <alternativeName>
        <fullName evidence="2">50S ribosomal protein L34</fullName>
    </alternativeName>
</protein>
<dbReference type="EMBL" id="AE016822">
    <property type="protein sequence ID" value="AAT90138.1"/>
    <property type="molecule type" value="Genomic_DNA"/>
</dbReference>
<dbReference type="RefSeq" id="WP_011187117.1">
    <property type="nucleotide sequence ID" value="NC_006087.1"/>
</dbReference>
<dbReference type="SMR" id="Q6ABV3"/>
<dbReference type="STRING" id="281090.Lxx25280"/>
<dbReference type="KEGG" id="lxx:Lxx25280"/>
<dbReference type="eggNOG" id="COG0230">
    <property type="taxonomic scope" value="Bacteria"/>
</dbReference>
<dbReference type="HOGENOM" id="CLU_129938_2_1_11"/>
<dbReference type="Proteomes" id="UP000001306">
    <property type="component" value="Chromosome"/>
</dbReference>
<dbReference type="GO" id="GO:1990904">
    <property type="term" value="C:ribonucleoprotein complex"/>
    <property type="evidence" value="ECO:0007669"/>
    <property type="project" value="UniProtKB-KW"/>
</dbReference>
<dbReference type="GO" id="GO:0005840">
    <property type="term" value="C:ribosome"/>
    <property type="evidence" value="ECO:0007669"/>
    <property type="project" value="UniProtKB-KW"/>
</dbReference>
<dbReference type="GO" id="GO:0003735">
    <property type="term" value="F:structural constituent of ribosome"/>
    <property type="evidence" value="ECO:0007669"/>
    <property type="project" value="InterPro"/>
</dbReference>
<dbReference type="GO" id="GO:0006412">
    <property type="term" value="P:translation"/>
    <property type="evidence" value="ECO:0007669"/>
    <property type="project" value="UniProtKB-UniRule"/>
</dbReference>
<dbReference type="FunFam" id="1.10.287.3980:FF:000001">
    <property type="entry name" value="Mitochondrial ribosomal protein L34"/>
    <property type="match status" value="1"/>
</dbReference>
<dbReference type="Gene3D" id="1.10.287.3980">
    <property type="match status" value="1"/>
</dbReference>
<dbReference type="HAMAP" id="MF_00391">
    <property type="entry name" value="Ribosomal_bL34"/>
    <property type="match status" value="1"/>
</dbReference>
<dbReference type="InterPro" id="IPR000271">
    <property type="entry name" value="Ribosomal_bL34"/>
</dbReference>
<dbReference type="InterPro" id="IPR020939">
    <property type="entry name" value="Ribosomal_bL34_CS"/>
</dbReference>
<dbReference type="NCBIfam" id="TIGR01030">
    <property type="entry name" value="rpmH_bact"/>
    <property type="match status" value="1"/>
</dbReference>
<dbReference type="PANTHER" id="PTHR14503:SF4">
    <property type="entry name" value="LARGE RIBOSOMAL SUBUNIT PROTEIN BL34M"/>
    <property type="match status" value="1"/>
</dbReference>
<dbReference type="PANTHER" id="PTHR14503">
    <property type="entry name" value="MITOCHONDRIAL RIBOSOMAL PROTEIN 34 FAMILY MEMBER"/>
    <property type="match status" value="1"/>
</dbReference>
<dbReference type="Pfam" id="PF00468">
    <property type="entry name" value="Ribosomal_L34"/>
    <property type="match status" value="1"/>
</dbReference>
<dbReference type="PROSITE" id="PS00784">
    <property type="entry name" value="RIBOSOMAL_L34"/>
    <property type="match status" value="1"/>
</dbReference>
<organism>
    <name type="scientific">Leifsonia xyli subsp. xyli (strain CTCB07)</name>
    <dbReference type="NCBI Taxonomy" id="281090"/>
    <lineage>
        <taxon>Bacteria</taxon>
        <taxon>Bacillati</taxon>
        <taxon>Actinomycetota</taxon>
        <taxon>Actinomycetes</taxon>
        <taxon>Micrococcales</taxon>
        <taxon>Microbacteriaceae</taxon>
        <taxon>Leifsonia</taxon>
    </lineage>
</organism>
<comment type="similarity">
    <text evidence="1">Belongs to the bacterial ribosomal protein bL34 family.</text>
</comment>
<name>RL34_LEIXX</name>